<evidence type="ECO:0000255" key="1">
    <source>
        <dbReference type="HAMAP-Rule" id="MF_00141"/>
    </source>
</evidence>
<proteinExistence type="inferred from homology"/>
<organism>
    <name type="scientific">Pseudomonas aeruginosa (strain UCBPP-PA14)</name>
    <dbReference type="NCBI Taxonomy" id="208963"/>
    <lineage>
        <taxon>Bacteria</taxon>
        <taxon>Pseudomonadati</taxon>
        <taxon>Pseudomonadota</taxon>
        <taxon>Gammaproteobacteria</taxon>
        <taxon>Pseudomonadales</taxon>
        <taxon>Pseudomonadaceae</taxon>
        <taxon>Pseudomonas</taxon>
    </lineage>
</organism>
<keyword id="KW-0963">Cytoplasm</keyword>
<keyword id="KW-0251">Elongation factor</keyword>
<keyword id="KW-0648">Protein biosynthesis</keyword>
<name>EFP_PSEAB</name>
<protein>
    <recommendedName>
        <fullName evidence="1">Elongation factor P</fullName>
        <shortName evidence="1">EF-P</shortName>
    </recommendedName>
</protein>
<comment type="function">
    <text evidence="1">Involved in peptide bond synthesis. Stimulates efficient translation and peptide-bond synthesis on native or reconstituted 70S ribosomes in vitro. Probably functions indirectly by altering the affinity of the ribosome for aminoacyl-tRNA, thus increasing their reactivity as acceptors for peptidyl transferase.</text>
</comment>
<comment type="pathway">
    <text evidence="1">Protein biosynthesis; polypeptide chain elongation.</text>
</comment>
<comment type="subcellular location">
    <subcellularLocation>
        <location evidence="1">Cytoplasm</location>
    </subcellularLocation>
</comment>
<comment type="similarity">
    <text evidence="1">Belongs to the elongation factor P family.</text>
</comment>
<accession>Q02P14</accession>
<dbReference type="EMBL" id="CP000438">
    <property type="protein sequence ID" value="ABJ12091.1"/>
    <property type="molecule type" value="Genomic_DNA"/>
</dbReference>
<dbReference type="RefSeq" id="WP_003090942.1">
    <property type="nucleotide sequence ID" value="NZ_CP034244.1"/>
</dbReference>
<dbReference type="SMR" id="Q02P14"/>
<dbReference type="GeneID" id="77220646"/>
<dbReference type="KEGG" id="pau:PA14_27210"/>
<dbReference type="PseudoCAP" id="PA14_27210"/>
<dbReference type="HOGENOM" id="CLU_074944_2_1_6"/>
<dbReference type="BioCyc" id="PAER208963:G1G74-2262-MONOMER"/>
<dbReference type="UniPathway" id="UPA00345"/>
<dbReference type="Proteomes" id="UP000000653">
    <property type="component" value="Chromosome"/>
</dbReference>
<dbReference type="GO" id="GO:0005737">
    <property type="term" value="C:cytoplasm"/>
    <property type="evidence" value="ECO:0007669"/>
    <property type="project" value="UniProtKB-SubCell"/>
</dbReference>
<dbReference type="GO" id="GO:0003746">
    <property type="term" value="F:translation elongation factor activity"/>
    <property type="evidence" value="ECO:0007669"/>
    <property type="project" value="UniProtKB-UniRule"/>
</dbReference>
<dbReference type="GO" id="GO:0043043">
    <property type="term" value="P:peptide biosynthetic process"/>
    <property type="evidence" value="ECO:0007669"/>
    <property type="project" value="InterPro"/>
</dbReference>
<dbReference type="CDD" id="cd04470">
    <property type="entry name" value="S1_EF-P_repeat_1"/>
    <property type="match status" value="1"/>
</dbReference>
<dbReference type="CDD" id="cd05794">
    <property type="entry name" value="S1_EF-P_repeat_2"/>
    <property type="match status" value="1"/>
</dbReference>
<dbReference type="FunFam" id="2.30.30.30:FF:000003">
    <property type="entry name" value="Elongation factor P"/>
    <property type="match status" value="1"/>
</dbReference>
<dbReference type="FunFam" id="2.40.50.140:FF:000004">
    <property type="entry name" value="Elongation factor P"/>
    <property type="match status" value="1"/>
</dbReference>
<dbReference type="FunFam" id="2.40.50.140:FF:000009">
    <property type="entry name" value="Elongation factor P"/>
    <property type="match status" value="1"/>
</dbReference>
<dbReference type="Gene3D" id="2.30.30.30">
    <property type="match status" value="1"/>
</dbReference>
<dbReference type="Gene3D" id="2.40.50.140">
    <property type="entry name" value="Nucleic acid-binding proteins"/>
    <property type="match status" value="2"/>
</dbReference>
<dbReference type="HAMAP" id="MF_00141">
    <property type="entry name" value="EF_P"/>
    <property type="match status" value="1"/>
</dbReference>
<dbReference type="InterPro" id="IPR015365">
    <property type="entry name" value="Elong-fact-P_C"/>
</dbReference>
<dbReference type="InterPro" id="IPR012340">
    <property type="entry name" value="NA-bd_OB-fold"/>
</dbReference>
<dbReference type="InterPro" id="IPR014722">
    <property type="entry name" value="Rib_uL2_dom2"/>
</dbReference>
<dbReference type="InterPro" id="IPR020599">
    <property type="entry name" value="Transl_elong_fac_P/YeiP"/>
</dbReference>
<dbReference type="InterPro" id="IPR013185">
    <property type="entry name" value="Transl_elong_KOW-like"/>
</dbReference>
<dbReference type="InterPro" id="IPR001059">
    <property type="entry name" value="Transl_elong_P/YeiP_cen"/>
</dbReference>
<dbReference type="InterPro" id="IPR011768">
    <property type="entry name" value="Transl_elongation_fac_P"/>
</dbReference>
<dbReference type="InterPro" id="IPR008991">
    <property type="entry name" value="Translation_prot_SH3-like_sf"/>
</dbReference>
<dbReference type="NCBIfam" id="TIGR00038">
    <property type="entry name" value="efp"/>
    <property type="match status" value="1"/>
</dbReference>
<dbReference type="NCBIfam" id="NF001810">
    <property type="entry name" value="PRK00529.1"/>
    <property type="match status" value="1"/>
</dbReference>
<dbReference type="PANTHER" id="PTHR30053">
    <property type="entry name" value="ELONGATION FACTOR P"/>
    <property type="match status" value="1"/>
</dbReference>
<dbReference type="PANTHER" id="PTHR30053:SF12">
    <property type="entry name" value="ELONGATION FACTOR P (EF-P) FAMILY PROTEIN"/>
    <property type="match status" value="1"/>
</dbReference>
<dbReference type="Pfam" id="PF01132">
    <property type="entry name" value="EFP"/>
    <property type="match status" value="1"/>
</dbReference>
<dbReference type="Pfam" id="PF08207">
    <property type="entry name" value="EFP_N"/>
    <property type="match status" value="1"/>
</dbReference>
<dbReference type="Pfam" id="PF09285">
    <property type="entry name" value="Elong-fact-P_C"/>
    <property type="match status" value="1"/>
</dbReference>
<dbReference type="PIRSF" id="PIRSF005901">
    <property type="entry name" value="EF-P"/>
    <property type="match status" value="1"/>
</dbReference>
<dbReference type="SMART" id="SM01185">
    <property type="entry name" value="EFP"/>
    <property type="match status" value="1"/>
</dbReference>
<dbReference type="SMART" id="SM00841">
    <property type="entry name" value="Elong-fact-P_C"/>
    <property type="match status" value="1"/>
</dbReference>
<dbReference type="SUPFAM" id="SSF50249">
    <property type="entry name" value="Nucleic acid-binding proteins"/>
    <property type="match status" value="2"/>
</dbReference>
<dbReference type="SUPFAM" id="SSF50104">
    <property type="entry name" value="Translation proteins SH3-like domain"/>
    <property type="match status" value="1"/>
</dbReference>
<reference key="1">
    <citation type="journal article" date="2006" name="Genome Biol.">
        <title>Genomic analysis reveals that Pseudomonas aeruginosa virulence is combinatorial.</title>
        <authorList>
            <person name="Lee D.G."/>
            <person name="Urbach J.M."/>
            <person name="Wu G."/>
            <person name="Liberati N.T."/>
            <person name="Feinbaum R.L."/>
            <person name="Miyata S."/>
            <person name="Diggins L.T."/>
            <person name="He J."/>
            <person name="Saucier M."/>
            <person name="Deziel E."/>
            <person name="Friedman L."/>
            <person name="Li L."/>
            <person name="Grills G."/>
            <person name="Montgomery K."/>
            <person name="Kucherlapati R."/>
            <person name="Rahme L.G."/>
            <person name="Ausubel F.M."/>
        </authorList>
    </citation>
    <scope>NUCLEOTIDE SEQUENCE [LARGE SCALE GENOMIC DNA]</scope>
    <source>
        <strain>UCBPP-PA14</strain>
    </source>
</reference>
<gene>
    <name evidence="1" type="primary">efp</name>
    <name type="ordered locus">PA14_27210</name>
</gene>
<sequence>MKTAQEFRAGQVANINGAPWVIQKAEFNKSGRNAAVVKMKLKNLLTGAGTETVFKADDKLEPIILDRKEVTYSYFADPLYVFMDSEFNQYEIEKDDLEGVLTFIEDGMTDICEAVFYNDKVISVELPTTIVRQIAYTEPAVRGDTSGKVMKTARLNNGAELQVSAFCEIGDSIEIDTRTGEYKSRVKA</sequence>
<feature type="chain" id="PRO_1000010812" description="Elongation factor P">
    <location>
        <begin position="1"/>
        <end position="188"/>
    </location>
</feature>